<keyword id="KW-1283">Bacterial microcompartment</keyword>
<keyword id="KW-0120">Carbon dioxide fixation</keyword>
<keyword id="KW-1282">Carboxysome</keyword>
<keyword id="KW-0602">Photosynthesis</keyword>
<keyword id="KW-1185">Reference proteome</keyword>
<keyword id="KW-0677">Repeat</keyword>
<accession>P46205</accession>
<accession>Q31NB4</accession>
<name>CCMO_SYNE7</name>
<sequence>MSASLPAYSQPRNAGALGVICTRSFPAVVGTADMMLKSADVTLIGYEKTGSGFCTAIIRGGYADIKLALEAGVATARQFEQYVSSTILPRPQGNLEAVLPISRRLSQEAMATRSHQNVGAIGLIETNGFPALVGAADAMLKSANVKLICYEKTGSGLCTAIVQGTVSNVTVAVEAGMYAAERIGQLNAIMVIPRPLDDLMDSLPEPQSDSEAAQPLQLPLRVREKQPLLELPELERQPIAIEAPRLLAEERQSALELAQETPLAEPLELPNPRDDQ</sequence>
<dbReference type="EMBL" id="M30808">
    <property type="protein sequence ID" value="AAA27327.1"/>
    <property type="molecule type" value="Genomic_DNA"/>
</dbReference>
<dbReference type="EMBL" id="CP000100">
    <property type="protein sequence ID" value="ABB57455.1"/>
    <property type="molecule type" value="Genomic_DNA"/>
</dbReference>
<dbReference type="RefSeq" id="WP_011242445.1">
    <property type="nucleotide sequence ID" value="NZ_JACJTX010000004.1"/>
</dbReference>
<dbReference type="SMR" id="P46205"/>
<dbReference type="STRING" id="1140.Synpcc7942_1425"/>
<dbReference type="PaxDb" id="1140-Synpcc7942_1425"/>
<dbReference type="KEGG" id="syf:Synpcc7942_1425"/>
<dbReference type="eggNOG" id="COG4577">
    <property type="taxonomic scope" value="Bacteria"/>
</dbReference>
<dbReference type="HOGENOM" id="CLU_078216_0_0_3"/>
<dbReference type="OrthoDB" id="5296101at2"/>
<dbReference type="BioCyc" id="SYNEL:SYNPCC7942_1425-MONOMER"/>
<dbReference type="Proteomes" id="UP000889800">
    <property type="component" value="Chromosome"/>
</dbReference>
<dbReference type="GO" id="GO:0031470">
    <property type="term" value="C:carboxysome"/>
    <property type="evidence" value="ECO:0000314"/>
    <property type="project" value="UniProtKB"/>
</dbReference>
<dbReference type="GO" id="GO:0043886">
    <property type="term" value="F:structural constituent of carboxysome shell"/>
    <property type="evidence" value="ECO:0000315"/>
    <property type="project" value="UniProtKB"/>
</dbReference>
<dbReference type="GO" id="GO:0015977">
    <property type="term" value="P:carbon fixation"/>
    <property type="evidence" value="ECO:0007669"/>
    <property type="project" value="UniProtKB-KW"/>
</dbReference>
<dbReference type="GO" id="GO:0015979">
    <property type="term" value="P:photosynthesis"/>
    <property type="evidence" value="ECO:0007669"/>
    <property type="project" value="UniProtKB-KW"/>
</dbReference>
<dbReference type="CDD" id="cd07057">
    <property type="entry name" value="BMC_CcmK"/>
    <property type="match status" value="2"/>
</dbReference>
<dbReference type="Gene3D" id="3.30.70.1710">
    <property type="match status" value="2"/>
</dbReference>
<dbReference type="InterPro" id="IPR020808">
    <property type="entry name" value="Bact_microcomp_CS"/>
</dbReference>
<dbReference type="InterPro" id="IPR000249">
    <property type="entry name" value="BMC_dom"/>
</dbReference>
<dbReference type="InterPro" id="IPR050575">
    <property type="entry name" value="BMC_shell"/>
</dbReference>
<dbReference type="InterPro" id="IPR037233">
    <property type="entry name" value="CcmK-like_sf"/>
</dbReference>
<dbReference type="InterPro" id="IPR044872">
    <property type="entry name" value="CcmK/CsoS1_BMC"/>
</dbReference>
<dbReference type="PANTHER" id="PTHR33941:SF11">
    <property type="entry name" value="BACTERIAL MICROCOMPARTMENT SHELL PROTEIN PDUJ"/>
    <property type="match status" value="1"/>
</dbReference>
<dbReference type="PANTHER" id="PTHR33941">
    <property type="entry name" value="PROPANEDIOL UTILIZATION PROTEIN PDUA"/>
    <property type="match status" value="1"/>
</dbReference>
<dbReference type="Pfam" id="PF00936">
    <property type="entry name" value="BMC"/>
    <property type="match status" value="2"/>
</dbReference>
<dbReference type="SMART" id="SM00877">
    <property type="entry name" value="BMC"/>
    <property type="match status" value="2"/>
</dbReference>
<dbReference type="SUPFAM" id="SSF143414">
    <property type="entry name" value="CcmK-like"/>
    <property type="match status" value="2"/>
</dbReference>
<dbReference type="PROSITE" id="PS01139">
    <property type="entry name" value="BMC_1"/>
    <property type="match status" value="2"/>
</dbReference>
<dbReference type="PROSITE" id="PS51930">
    <property type="entry name" value="BMC_2"/>
    <property type="match status" value="2"/>
</dbReference>
<comment type="function">
    <text evidence="3 4 11 12">Required for formation of the carboxysome, a polyhedral inclusion where RuBisCO (ribulose bisphosphate carboxylase, rbcL-rbcS) is sequestered. Required for recruitment of major shell protein CcmK2 to the pre-carboxysome (PubMed:22928045, PubMed:24267892). Suggested to be a carboxysome shell protein, but it is not detected in gels, mass spectrometry or by protein sequencing (Probable).</text>
</comment>
<comment type="function">
    <text evidence="4">Beta-carboxysome assembly initiates when soluble RuBisCO is condensed into a liquid matrix in a pre-carboxysome by the RbcS-like domains of probably both CcmM58 and CcmM35. CcmN interacts with the N-terminus of CcmM58, and then recruits the CcmK2 major shell protein via CcmN's encapsulation peptide. Shell formation requires CcmK proteins and CcmO. CcmL caps the otherwise elongated carboxysome. Once fully encapsulated carboxysomes are formed, they migrate within the cell probably via interactions with the cytoskeleton.</text>
</comment>
<comment type="subunit">
    <text evidence="3">Homooligomerizes, possibly as a trimer, interacts with CcmK2 in the carboxysome.</text>
</comment>
<comment type="subcellular location">
    <subcellularLocation>
        <location evidence="3 4 6">Carboxysome</location>
    </subcellularLocation>
    <text evidence="3">This cyanobacterium makes beta-type carboxysomes.</text>
</comment>
<comment type="domain">
    <text evidence="11 12">Has 2 BMC domains, is thought to trimerize giving a hexamer that may interact with CcmK proteins in the carboxysome shell.</text>
</comment>
<comment type="disruption phenotype">
    <text evidence="3 4 7">Cells make aberrantly large polar bodies instead of wild-type carboxysomes, do not grow in normal air but do grow on 4-5% CO(2), called a high-CO(2) requiring phenotype, HCR, no accumulation of CcmK2 (PubMed:22928045, PubMed:24267892, PubMed:8491708). When ccmL-ccmM-ccmN-ccmO are deleted no carboxysomes form, cells are HCR and RuBisCO is soluble (PubMed:8491708).</text>
</comment>
<comment type="biotechnology">
    <text evidence="5">Heterologous expression of 12 carboxysomal genes in E.coli (ccaA, ccmK2, ccmK3, ccmK4, ccmL, ccmM, ccmN, ccmO, ccmP, rbcL, rbcS, rbcX) leads to the formation of bodies that resemble carboxysomes, have densely packed paracrystalline arrays and RuBisCO activity. These structures open the door to generating carboxysomes in plant cells to increase their photosynthesis and productivity, as well as tailoring bacterial microcompartments to specific metabolic needs and molecule delivery.</text>
</comment>
<comment type="similarity">
    <text evidence="1">Belongs to the bacterial microcompartments protein family.</text>
</comment>
<evidence type="ECO:0000255" key="1">
    <source>
        <dbReference type="PROSITE-ProRule" id="PRU01278"/>
    </source>
</evidence>
<evidence type="ECO:0000256" key="2">
    <source>
        <dbReference type="SAM" id="MobiDB-lite"/>
    </source>
</evidence>
<evidence type="ECO:0000269" key="3">
    <source>
    </source>
</evidence>
<evidence type="ECO:0000269" key="4">
    <source>
    </source>
</evidence>
<evidence type="ECO:0000269" key="5">
    <source>
    </source>
</evidence>
<evidence type="ECO:0000269" key="6">
    <source>
    </source>
</evidence>
<evidence type="ECO:0000269" key="7">
    <source>
    </source>
</evidence>
<evidence type="ECO:0000303" key="8">
    <source>
    </source>
</evidence>
<evidence type="ECO:0000303" key="9">
    <source>
    </source>
</evidence>
<evidence type="ECO:0000305" key="10"/>
<evidence type="ECO:0000305" key="11">
    <source>
    </source>
</evidence>
<evidence type="ECO:0000305" key="12">
    <source>
    </source>
</evidence>
<gene>
    <name evidence="8" type="primary">ccmO</name>
    <name type="ordered locus">Synpcc7942_1425</name>
</gene>
<feature type="chain" id="PRO_0000004789" description="Carboxysome assembly protein CcmO">
    <location>
        <begin position="1"/>
        <end position="276"/>
    </location>
</feature>
<feature type="domain" description="BMC 1" evidence="1">
    <location>
        <begin position="16"/>
        <end position="100"/>
    </location>
</feature>
<feature type="domain" description="BMC 2" evidence="1">
    <location>
        <begin position="120"/>
        <end position="204"/>
    </location>
</feature>
<feature type="region of interest" description="Disordered" evidence="2">
    <location>
        <begin position="200"/>
        <end position="219"/>
    </location>
</feature>
<feature type="region of interest" description="Disordered" evidence="2">
    <location>
        <begin position="252"/>
        <end position="276"/>
    </location>
</feature>
<feature type="sequence conflict" description="In Ref. 1; AAA27327." evidence="10" ref="1">
    <location>
        <position position="35"/>
    </location>
</feature>
<organism>
    <name type="scientific">Synechococcus elongatus (strain ATCC 33912 / PCC 7942 / FACHB-805)</name>
    <name type="common">Anacystis nidulans R2</name>
    <dbReference type="NCBI Taxonomy" id="1140"/>
    <lineage>
        <taxon>Bacteria</taxon>
        <taxon>Bacillati</taxon>
        <taxon>Cyanobacteriota</taxon>
        <taxon>Cyanophyceae</taxon>
        <taxon>Synechococcales</taxon>
        <taxon>Synechococcaceae</taxon>
        <taxon>Synechococcus</taxon>
    </lineage>
</organism>
<protein>
    <recommendedName>
        <fullName evidence="10">Carboxysome assembly protein CcmO</fullName>
    </recommendedName>
    <alternativeName>
        <fullName>Carbon dioxide concentrating mechanism protein CcmO</fullName>
    </alternativeName>
    <alternativeName>
        <fullName evidence="9">ORF II</fullName>
    </alternativeName>
</protein>
<reference key="1">
    <citation type="journal article" date="1989" name="J. Bacteriol.">
        <title>The 5'-flanking region of the gene encoding the large subunit of ribulose-1,5-bisphosphate carboxylase/oxygenase is crucial for growth of the cyanobacterium Synechococcus sp. strain PCC 7942 at the level of CO2 in air.</title>
        <authorList>
            <person name="Friedberg D."/>
            <person name="Kaplan A."/>
            <person name="Ariel R."/>
            <person name="Kessel M."/>
            <person name="Seijffers J."/>
        </authorList>
    </citation>
    <scope>NUCLEOTIDE SEQUENCE [GENOMIC DNA]</scope>
    <source>
        <strain>ATCC 33912 / PCC 7942 / FACHB-805</strain>
    </source>
</reference>
<reference key="2">
    <citation type="submission" date="2005-08" db="EMBL/GenBank/DDBJ databases">
        <title>Complete sequence of chromosome 1 of Synechococcus elongatus PCC 7942.</title>
        <authorList>
            <consortium name="US DOE Joint Genome Institute"/>
            <person name="Copeland A."/>
            <person name="Lucas S."/>
            <person name="Lapidus A."/>
            <person name="Barry K."/>
            <person name="Detter J.C."/>
            <person name="Glavina T."/>
            <person name="Hammon N."/>
            <person name="Israni S."/>
            <person name="Pitluck S."/>
            <person name="Schmutz J."/>
            <person name="Larimer F."/>
            <person name="Land M."/>
            <person name="Kyrpides N."/>
            <person name="Lykidis A."/>
            <person name="Golden S."/>
            <person name="Richardson P."/>
        </authorList>
    </citation>
    <scope>NUCLEOTIDE SEQUENCE [LARGE SCALE GENOMIC DNA]</scope>
    <source>
        <strain>ATCC 33912 / PCC 7942 / FACHB-805</strain>
    </source>
</reference>
<reference key="3">
    <citation type="journal article" date="1993" name="J. Bacteriol.">
        <title>Analysis of a genomic DNA region from the cyanobacterium Synechococcus sp. strain PCC7942 involved in carboxysome assembly and function.</title>
        <authorList>
            <person name="Price G.D."/>
            <person name="Howitt S.M."/>
            <person name="Harrison K."/>
            <person name="Badger M.R."/>
        </authorList>
    </citation>
    <scope>DISRUPTION PHENOTYPE</scope>
    <source>
        <strain>ATCC 33912 / PCC 7942 / FACHB-805</strain>
    </source>
</reference>
<reference key="4">
    <citation type="journal article" date="1994" name="Appl. Environ. Microbiol.">
        <title>Inactivation of ccmO in Synechococcus sp. Strain PCC 7942 Results in a Mutant Requiring High Levels of CO(2).</title>
        <authorList>
            <person name="Marco E."/>
            <person name="Martinez I."/>
            <person name="Ronen-Tarazi M."/>
            <person name="Orus M.I."/>
            <person name="Kaplan A."/>
        </authorList>
    </citation>
    <scope>DISRUPTION PHENOTYPE</scope>
    <source>
        <strain>ATCC 33912 / PCC 7942 / FACHB-805</strain>
    </source>
</reference>
<reference key="5">
    <citation type="journal article" date="2012" name="PLoS ONE">
        <title>Structural determinants of the outer shell of beta-carboxysomes in Synechococcus elongatus PCC 7942: roles for CcmK2, K3-K4, CcmO, and CcmL.</title>
        <authorList>
            <person name="Rae B.D."/>
            <person name="Long B.M."/>
            <person name="Badger M.R."/>
            <person name="Price G.D."/>
        </authorList>
    </citation>
    <scope>FUNCTION</scope>
    <scope>INTERACTION WITH CCMK2</scope>
    <scope>SUBCELLULAR LOCATION</scope>
    <scope>DISRUPTION PHENOTYPE</scope>
    <source>
        <strain>ATCC 33912 / PCC 7942 / FACHB-805</strain>
    </source>
</reference>
<reference key="6">
    <citation type="journal article" date="2013" name="Cell">
        <title>Biogenesis of a bacterial organelle: the carboxysome assembly pathway.</title>
        <authorList>
            <person name="Cameron J.C."/>
            <person name="Wilson S.C."/>
            <person name="Bernstein S.L."/>
            <person name="Kerfeld C.A."/>
        </authorList>
    </citation>
    <scope>CARBOXYSOME ASSEMBLY PROCESS</scope>
    <scope>FUNCTION</scope>
    <scope>SUBCELLULAR LOCATION</scope>
    <scope>DISRUPTION PHENOTYPE</scope>
    <source>
        <strain>ATCC 33912 / PCC 7942 / FACHB-805</strain>
    </source>
</reference>
<reference key="7">
    <citation type="journal article" date="2018" name="Front. Plant Sci.">
        <title>Engineering and Modulating Functional Cyanobacterial CO2-Fixing Organelles.</title>
        <authorList>
            <person name="Fang Y."/>
            <person name="Huang F."/>
            <person name="Faulkner M."/>
            <person name="Jiang Q."/>
            <person name="Dykes G.F."/>
            <person name="Yang M."/>
            <person name="Liu L.N."/>
        </authorList>
    </citation>
    <scope>BIOTECHNOLOGY</scope>
    <source>
        <strain>ATCC 33912 / PCC 7942 / FACHB-805</strain>
    </source>
</reference>
<reference key="8">
    <citation type="journal article" date="2019" name="Plant Cell">
        <title>Single-Organelle Quantification Reveals Stoichiometric and Structural Variability of Carboxysomes Dependent on the Environment.</title>
        <authorList>
            <person name="Sun Y."/>
            <person name="Wollman A.J.M."/>
            <person name="Huang F."/>
            <person name="Leake M.C."/>
            <person name="Liu L.N."/>
        </authorList>
    </citation>
    <scope>SUBCELLULAR LOCATION</scope>
    <source>
        <strain>ATCC 33912 / PCC 7942 / FACHB-805</strain>
    </source>
</reference>
<proteinExistence type="evidence at protein level"/>